<gene>
    <name evidence="1" type="primary">rnhC</name>
    <name type="ordered locus">SaurJH9_1199</name>
</gene>
<evidence type="ECO:0000255" key="1">
    <source>
        <dbReference type="HAMAP-Rule" id="MF_00053"/>
    </source>
</evidence>
<evidence type="ECO:0000255" key="2">
    <source>
        <dbReference type="PROSITE-ProRule" id="PRU01319"/>
    </source>
</evidence>
<keyword id="KW-0963">Cytoplasm</keyword>
<keyword id="KW-0255">Endonuclease</keyword>
<keyword id="KW-0378">Hydrolase</keyword>
<keyword id="KW-0460">Magnesium</keyword>
<keyword id="KW-0479">Metal-binding</keyword>
<keyword id="KW-0540">Nuclease</keyword>
<accession>A5IS26</accession>
<reference key="1">
    <citation type="submission" date="2007-05" db="EMBL/GenBank/DDBJ databases">
        <title>Complete sequence of chromosome of Staphylococcus aureus subsp. aureus JH9.</title>
        <authorList>
            <consortium name="US DOE Joint Genome Institute"/>
            <person name="Copeland A."/>
            <person name="Lucas S."/>
            <person name="Lapidus A."/>
            <person name="Barry K."/>
            <person name="Detter J.C."/>
            <person name="Glavina del Rio T."/>
            <person name="Hammon N."/>
            <person name="Israni S."/>
            <person name="Pitluck S."/>
            <person name="Chain P."/>
            <person name="Malfatti S."/>
            <person name="Shin M."/>
            <person name="Vergez L."/>
            <person name="Schmutz J."/>
            <person name="Larimer F."/>
            <person name="Land M."/>
            <person name="Hauser L."/>
            <person name="Kyrpides N."/>
            <person name="Kim E."/>
            <person name="Tomasz A."/>
            <person name="Richardson P."/>
        </authorList>
    </citation>
    <scope>NUCLEOTIDE SEQUENCE [LARGE SCALE GENOMIC DNA]</scope>
    <source>
        <strain>JH9</strain>
    </source>
</reference>
<proteinExistence type="inferred from homology"/>
<sequence>MANIVFKLSDKDITTLMSRITFDTENLPQGMKARAKYQNTTVNIYQSGKVMFQGNHAEAVSKELLPQHSQLNTNKTKKKNMANSSLEQTLMYDQFNCIGSDEAGSGDYFGPLTVCAAFVTKEHVPILKTLGVDDSKKLTDTKIVELAEQLVAFIPHSLLTLHNDKYNIQQAKGWTQVKMKAVLHNEAIKNVLEKIDSSQLDYIVIDQFAKREVYSHYALSDIPLPKKTKFETKGESKSLAIAVASIISRYAFITYMDQISKYINMTIPKGAGAKVDVIAAKIIKKYGLSRLDTISKKHFKNREKAQKILKPL</sequence>
<dbReference type="EC" id="3.1.26.4" evidence="1"/>
<dbReference type="EMBL" id="CP000703">
    <property type="protein sequence ID" value="ABQ48999.1"/>
    <property type="molecule type" value="Genomic_DNA"/>
</dbReference>
<dbReference type="RefSeq" id="WP_001284282.1">
    <property type="nucleotide sequence ID" value="NC_009487.1"/>
</dbReference>
<dbReference type="SMR" id="A5IS26"/>
<dbReference type="KEGG" id="saj:SaurJH9_1199"/>
<dbReference type="HOGENOM" id="CLU_059546_1_0_9"/>
<dbReference type="GO" id="GO:0005737">
    <property type="term" value="C:cytoplasm"/>
    <property type="evidence" value="ECO:0007669"/>
    <property type="project" value="UniProtKB-SubCell"/>
</dbReference>
<dbReference type="GO" id="GO:0032299">
    <property type="term" value="C:ribonuclease H2 complex"/>
    <property type="evidence" value="ECO:0007669"/>
    <property type="project" value="TreeGrafter"/>
</dbReference>
<dbReference type="GO" id="GO:0000287">
    <property type="term" value="F:magnesium ion binding"/>
    <property type="evidence" value="ECO:0007669"/>
    <property type="project" value="UniProtKB-UniRule"/>
</dbReference>
<dbReference type="GO" id="GO:0003723">
    <property type="term" value="F:RNA binding"/>
    <property type="evidence" value="ECO:0007669"/>
    <property type="project" value="InterPro"/>
</dbReference>
<dbReference type="GO" id="GO:0004523">
    <property type="term" value="F:RNA-DNA hybrid ribonuclease activity"/>
    <property type="evidence" value="ECO:0007669"/>
    <property type="project" value="UniProtKB-UniRule"/>
</dbReference>
<dbReference type="GO" id="GO:0043137">
    <property type="term" value="P:DNA replication, removal of RNA primer"/>
    <property type="evidence" value="ECO:0007669"/>
    <property type="project" value="TreeGrafter"/>
</dbReference>
<dbReference type="GO" id="GO:0006298">
    <property type="term" value="P:mismatch repair"/>
    <property type="evidence" value="ECO:0007669"/>
    <property type="project" value="TreeGrafter"/>
</dbReference>
<dbReference type="CDD" id="cd06590">
    <property type="entry name" value="RNase_HII_bacteria_HIII_like"/>
    <property type="match status" value="1"/>
</dbReference>
<dbReference type="CDD" id="cd14796">
    <property type="entry name" value="RNAse_HIII_N"/>
    <property type="match status" value="1"/>
</dbReference>
<dbReference type="FunFam" id="3.30.420.10:FF:000047">
    <property type="entry name" value="Ribonuclease HIII"/>
    <property type="match status" value="1"/>
</dbReference>
<dbReference type="Gene3D" id="3.30.420.10">
    <property type="entry name" value="Ribonuclease H-like superfamily/Ribonuclease H"/>
    <property type="match status" value="1"/>
</dbReference>
<dbReference type="Gene3D" id="3.30.310.10">
    <property type="entry name" value="TATA-Binding Protein"/>
    <property type="match status" value="1"/>
</dbReference>
<dbReference type="HAMAP" id="MF_00053">
    <property type="entry name" value="RNase_HIII"/>
    <property type="match status" value="1"/>
</dbReference>
<dbReference type="InterPro" id="IPR001352">
    <property type="entry name" value="RNase_HII/HIII"/>
</dbReference>
<dbReference type="InterPro" id="IPR024567">
    <property type="entry name" value="RNase_HII/HIII_dom"/>
</dbReference>
<dbReference type="InterPro" id="IPR004641">
    <property type="entry name" value="RNase_HIII"/>
</dbReference>
<dbReference type="InterPro" id="IPR024568">
    <property type="entry name" value="RNase_HIII_N"/>
</dbReference>
<dbReference type="InterPro" id="IPR012337">
    <property type="entry name" value="RNaseH-like_sf"/>
</dbReference>
<dbReference type="InterPro" id="IPR036397">
    <property type="entry name" value="RNaseH_sf"/>
</dbReference>
<dbReference type="InterPro" id="IPR012295">
    <property type="entry name" value="TBP_dom_sf"/>
</dbReference>
<dbReference type="NCBIfam" id="TIGR00716">
    <property type="entry name" value="rnhC"/>
    <property type="match status" value="1"/>
</dbReference>
<dbReference type="PANTHER" id="PTHR10954:SF23">
    <property type="entry name" value="RIBONUCLEASE"/>
    <property type="match status" value="1"/>
</dbReference>
<dbReference type="PANTHER" id="PTHR10954">
    <property type="entry name" value="RIBONUCLEASE H2 SUBUNIT A"/>
    <property type="match status" value="1"/>
</dbReference>
<dbReference type="Pfam" id="PF11858">
    <property type="entry name" value="DUF3378"/>
    <property type="match status" value="1"/>
</dbReference>
<dbReference type="Pfam" id="PF01351">
    <property type="entry name" value="RNase_HII"/>
    <property type="match status" value="1"/>
</dbReference>
<dbReference type="PIRSF" id="PIRSF037748">
    <property type="entry name" value="RnhC"/>
    <property type="match status" value="1"/>
</dbReference>
<dbReference type="SUPFAM" id="SSF53098">
    <property type="entry name" value="Ribonuclease H-like"/>
    <property type="match status" value="1"/>
</dbReference>
<dbReference type="PROSITE" id="PS51975">
    <property type="entry name" value="RNASE_H_2"/>
    <property type="match status" value="1"/>
</dbReference>
<protein>
    <recommendedName>
        <fullName evidence="1">Ribonuclease HIII</fullName>
        <shortName evidence="1">RNase HIII</shortName>
        <ecNumber evidence="1">3.1.26.4</ecNumber>
    </recommendedName>
</protein>
<comment type="function">
    <text evidence="1">Endonuclease that specifically degrades the RNA of RNA-DNA hybrids.</text>
</comment>
<comment type="catalytic activity">
    <reaction evidence="1">
        <text>Endonucleolytic cleavage to 5'-phosphomonoester.</text>
        <dbReference type="EC" id="3.1.26.4"/>
    </reaction>
</comment>
<comment type="cofactor">
    <cofactor evidence="1">
        <name>Mn(2+)</name>
        <dbReference type="ChEBI" id="CHEBI:29035"/>
    </cofactor>
    <cofactor evidence="1">
        <name>Mg(2+)</name>
        <dbReference type="ChEBI" id="CHEBI:18420"/>
    </cofactor>
    <text evidence="1">Manganese or magnesium. Binds 1 divalent metal ion per monomer in the absence of substrate. May bind a second metal ion after substrate binding.</text>
</comment>
<comment type="subcellular location">
    <subcellularLocation>
        <location evidence="1">Cytoplasm</location>
    </subcellularLocation>
</comment>
<comment type="similarity">
    <text evidence="1">Belongs to the RNase HII family. RnhC subfamily.</text>
</comment>
<name>RNH3_STAA9</name>
<organism>
    <name type="scientific">Staphylococcus aureus (strain JH9)</name>
    <dbReference type="NCBI Taxonomy" id="359786"/>
    <lineage>
        <taxon>Bacteria</taxon>
        <taxon>Bacillati</taxon>
        <taxon>Bacillota</taxon>
        <taxon>Bacilli</taxon>
        <taxon>Bacillales</taxon>
        <taxon>Staphylococcaceae</taxon>
        <taxon>Staphylococcus</taxon>
    </lineage>
</organism>
<feature type="chain" id="PRO_1000074942" description="Ribonuclease HIII">
    <location>
        <begin position="1"/>
        <end position="312"/>
    </location>
</feature>
<feature type="domain" description="RNase H type-2" evidence="2">
    <location>
        <begin position="95"/>
        <end position="311"/>
    </location>
</feature>
<feature type="binding site" evidence="1">
    <location>
        <position position="101"/>
    </location>
    <ligand>
        <name>a divalent metal cation</name>
        <dbReference type="ChEBI" id="CHEBI:60240"/>
    </ligand>
</feature>
<feature type="binding site" evidence="1">
    <location>
        <position position="102"/>
    </location>
    <ligand>
        <name>a divalent metal cation</name>
        <dbReference type="ChEBI" id="CHEBI:60240"/>
    </ligand>
</feature>
<feature type="binding site" evidence="1">
    <location>
        <position position="206"/>
    </location>
    <ligand>
        <name>a divalent metal cation</name>
        <dbReference type="ChEBI" id="CHEBI:60240"/>
    </ligand>
</feature>